<evidence type="ECO:0000255" key="1">
    <source>
        <dbReference type="HAMAP-Rule" id="MF_01953"/>
    </source>
</evidence>
<comment type="catalytic activity">
    <reaction evidence="1">
        <text>urea + 2 H2O + H(+) = hydrogencarbonate + 2 NH4(+)</text>
        <dbReference type="Rhea" id="RHEA:20557"/>
        <dbReference type="ChEBI" id="CHEBI:15377"/>
        <dbReference type="ChEBI" id="CHEBI:15378"/>
        <dbReference type="ChEBI" id="CHEBI:16199"/>
        <dbReference type="ChEBI" id="CHEBI:17544"/>
        <dbReference type="ChEBI" id="CHEBI:28938"/>
        <dbReference type="EC" id="3.5.1.5"/>
    </reaction>
</comment>
<comment type="cofactor">
    <cofactor evidence="1">
        <name>Ni cation</name>
        <dbReference type="ChEBI" id="CHEBI:25516"/>
    </cofactor>
    <text evidence="1">Binds 2 nickel ions per subunit.</text>
</comment>
<comment type="pathway">
    <text evidence="1">Nitrogen metabolism; urea degradation; CO(2) and NH(3) from urea (urease route): step 1/1.</text>
</comment>
<comment type="subunit">
    <text evidence="1">Heterotrimer of UreA (gamma), UreB (beta) and UreC (alpha) subunits. Three heterotrimers associate to form the active enzyme.</text>
</comment>
<comment type="subcellular location">
    <subcellularLocation>
        <location evidence="1">Cytoplasm</location>
    </subcellularLocation>
</comment>
<comment type="PTM">
    <text evidence="1">Carboxylation allows a single lysine to coordinate two nickel ions.</text>
</comment>
<comment type="similarity">
    <text evidence="1">Belongs to the metallo-dependent hydrolases superfamily. Urease alpha subunit family.</text>
</comment>
<reference key="1">
    <citation type="journal article" date="2007" name="PLoS Genet.">
        <title>Patterns and implications of gene gain and loss in the evolution of Prochlorococcus.</title>
        <authorList>
            <person name="Kettler G.C."/>
            <person name="Martiny A.C."/>
            <person name="Huang K."/>
            <person name="Zucker J."/>
            <person name="Coleman M.L."/>
            <person name="Rodrigue S."/>
            <person name="Chen F."/>
            <person name="Lapidus A."/>
            <person name="Ferriera S."/>
            <person name="Johnson J."/>
            <person name="Steglich C."/>
            <person name="Church G.M."/>
            <person name="Richardson P."/>
            <person name="Chisholm S.W."/>
        </authorList>
    </citation>
    <scope>NUCLEOTIDE SEQUENCE [LARGE SCALE GENOMIC DNA]</scope>
    <source>
        <strain>NATL2A</strain>
    </source>
</reference>
<proteinExistence type="inferred from homology"/>
<accession>Q46IY3</accession>
<sequence length="569" mass="61076">MPFKISRQAYAETYGPTKGDRIRLADTDLILEVEQDHTHYGDEVKFGGGKVIRDGMGQSQQSRDNGVVDTVITNALILDWWGIVKADIGIKDGKISGIGKAGNPDTQEGVNIIVGASTEAIAGEGSIITAGAIDSHIHFICPQQIETALASGVTTMLGGGTGPATGTNATTCTPGAFHISRMLQSAEGFPVNLGFFGKGNATNKAALEEQVRAGACGLKLHEDWGTTPACIDSCLSVADQLDVQVCIHTDTLNEAGFVEDTIKAIRGRTIHTFHTEGAGGGHAPDIIKICGESNVIPSSTNPTRPFTLNTLEEHLDMLMVCHHLDPKIPEDVAFAESRIRRETIAAEDILHDLGAFSIIASDSQAMGRVGEVISRTFQTAHKMKVQRGALPEDNQRNDNHRLKRYISKVTINPAIAHGISAHVGSVEVGKLADLVLWKPGFFGIKPDLVVKGGCIAWAQMGDANASIPTPQPVHGRPMFSSFGKAINPTCLTFLSESAIDAGVPERLKLERSYAPVKDTRKISKQSMKLNDARPKIEVDPQTYEVFANGELLTCEPAELLPLAQRYLLL</sequence>
<dbReference type="EC" id="3.5.1.5" evidence="1"/>
<dbReference type="EMBL" id="CP000095">
    <property type="protein sequence ID" value="AAZ58545.1"/>
    <property type="molecule type" value="Genomic_DNA"/>
</dbReference>
<dbReference type="RefSeq" id="WP_011295400.1">
    <property type="nucleotide sequence ID" value="NC_007335.2"/>
</dbReference>
<dbReference type="SMR" id="Q46IY3"/>
<dbReference type="STRING" id="59920.PMN2A_1055"/>
<dbReference type="MEROPS" id="M38.982"/>
<dbReference type="KEGG" id="pmn:PMN2A_1055"/>
<dbReference type="HOGENOM" id="CLU_000980_0_0_3"/>
<dbReference type="OrthoDB" id="9802793at2"/>
<dbReference type="PhylomeDB" id="Q46IY3"/>
<dbReference type="UniPathway" id="UPA00258">
    <property type="reaction ID" value="UER00370"/>
</dbReference>
<dbReference type="Proteomes" id="UP000002535">
    <property type="component" value="Chromosome"/>
</dbReference>
<dbReference type="GO" id="GO:0005737">
    <property type="term" value="C:cytoplasm"/>
    <property type="evidence" value="ECO:0007669"/>
    <property type="project" value="UniProtKB-SubCell"/>
</dbReference>
<dbReference type="GO" id="GO:0016151">
    <property type="term" value="F:nickel cation binding"/>
    <property type="evidence" value="ECO:0007669"/>
    <property type="project" value="UniProtKB-UniRule"/>
</dbReference>
<dbReference type="GO" id="GO:0009039">
    <property type="term" value="F:urease activity"/>
    <property type="evidence" value="ECO:0007669"/>
    <property type="project" value="UniProtKB-UniRule"/>
</dbReference>
<dbReference type="GO" id="GO:0043419">
    <property type="term" value="P:urea catabolic process"/>
    <property type="evidence" value="ECO:0007669"/>
    <property type="project" value="UniProtKB-UniRule"/>
</dbReference>
<dbReference type="CDD" id="cd00375">
    <property type="entry name" value="Urease_alpha"/>
    <property type="match status" value="1"/>
</dbReference>
<dbReference type="Gene3D" id="3.20.20.140">
    <property type="entry name" value="Metal-dependent hydrolases"/>
    <property type="match status" value="1"/>
</dbReference>
<dbReference type="Gene3D" id="2.30.40.10">
    <property type="entry name" value="Urease, subunit C, domain 1"/>
    <property type="match status" value="1"/>
</dbReference>
<dbReference type="HAMAP" id="MF_01953">
    <property type="entry name" value="Urease_alpha"/>
    <property type="match status" value="1"/>
</dbReference>
<dbReference type="InterPro" id="IPR006680">
    <property type="entry name" value="Amidohydro-rel"/>
</dbReference>
<dbReference type="InterPro" id="IPR011059">
    <property type="entry name" value="Metal-dep_hydrolase_composite"/>
</dbReference>
<dbReference type="InterPro" id="IPR032466">
    <property type="entry name" value="Metal_Hydrolase"/>
</dbReference>
<dbReference type="InterPro" id="IPR011612">
    <property type="entry name" value="Urease_alpha_N_dom"/>
</dbReference>
<dbReference type="InterPro" id="IPR050112">
    <property type="entry name" value="Urease_alpha_subunit"/>
</dbReference>
<dbReference type="InterPro" id="IPR017950">
    <property type="entry name" value="Urease_AS"/>
</dbReference>
<dbReference type="InterPro" id="IPR005848">
    <property type="entry name" value="Urease_asu"/>
</dbReference>
<dbReference type="InterPro" id="IPR017951">
    <property type="entry name" value="Urease_asu_c"/>
</dbReference>
<dbReference type="InterPro" id="IPR029754">
    <property type="entry name" value="Urease_Ni-bd"/>
</dbReference>
<dbReference type="NCBIfam" id="NF009685">
    <property type="entry name" value="PRK13206.1"/>
    <property type="match status" value="1"/>
</dbReference>
<dbReference type="NCBIfam" id="NF009686">
    <property type="entry name" value="PRK13207.1"/>
    <property type="match status" value="1"/>
</dbReference>
<dbReference type="NCBIfam" id="TIGR01792">
    <property type="entry name" value="urease_alph"/>
    <property type="match status" value="1"/>
</dbReference>
<dbReference type="PANTHER" id="PTHR43440">
    <property type="entry name" value="UREASE"/>
    <property type="match status" value="1"/>
</dbReference>
<dbReference type="PANTHER" id="PTHR43440:SF1">
    <property type="entry name" value="UREASE"/>
    <property type="match status" value="1"/>
</dbReference>
<dbReference type="Pfam" id="PF01979">
    <property type="entry name" value="Amidohydro_1"/>
    <property type="match status" value="1"/>
</dbReference>
<dbReference type="Pfam" id="PF00449">
    <property type="entry name" value="Urease_alpha"/>
    <property type="match status" value="1"/>
</dbReference>
<dbReference type="PRINTS" id="PR01752">
    <property type="entry name" value="UREASE"/>
</dbReference>
<dbReference type="SUPFAM" id="SSF51338">
    <property type="entry name" value="Composite domain of metallo-dependent hydrolases"/>
    <property type="match status" value="2"/>
</dbReference>
<dbReference type="SUPFAM" id="SSF51556">
    <property type="entry name" value="Metallo-dependent hydrolases"/>
    <property type="match status" value="1"/>
</dbReference>
<dbReference type="PROSITE" id="PS01120">
    <property type="entry name" value="UREASE_1"/>
    <property type="match status" value="1"/>
</dbReference>
<dbReference type="PROSITE" id="PS00145">
    <property type="entry name" value="UREASE_2"/>
    <property type="match status" value="1"/>
</dbReference>
<dbReference type="PROSITE" id="PS51368">
    <property type="entry name" value="UREASE_3"/>
    <property type="match status" value="1"/>
</dbReference>
<gene>
    <name evidence="1" type="primary">ureC</name>
    <name type="ordered locus">PMN2A_1055</name>
</gene>
<organism>
    <name type="scientific">Prochlorococcus marinus (strain NATL2A)</name>
    <dbReference type="NCBI Taxonomy" id="59920"/>
    <lineage>
        <taxon>Bacteria</taxon>
        <taxon>Bacillati</taxon>
        <taxon>Cyanobacteriota</taxon>
        <taxon>Cyanophyceae</taxon>
        <taxon>Synechococcales</taxon>
        <taxon>Prochlorococcaceae</taxon>
        <taxon>Prochlorococcus</taxon>
    </lineage>
</organism>
<keyword id="KW-0963">Cytoplasm</keyword>
<keyword id="KW-0378">Hydrolase</keyword>
<keyword id="KW-0479">Metal-binding</keyword>
<keyword id="KW-0533">Nickel</keyword>
<keyword id="KW-1185">Reference proteome</keyword>
<name>URE1_PROMT</name>
<feature type="chain" id="PRO_0000234163" description="Urease subunit alpha">
    <location>
        <begin position="1"/>
        <end position="569"/>
    </location>
</feature>
<feature type="domain" description="Urease" evidence="1">
    <location>
        <begin position="131"/>
        <end position="569"/>
    </location>
</feature>
<feature type="active site" description="Proton donor" evidence="1">
    <location>
        <position position="322"/>
    </location>
</feature>
<feature type="binding site" evidence="1">
    <location>
        <position position="136"/>
    </location>
    <ligand>
        <name>Ni(2+)</name>
        <dbReference type="ChEBI" id="CHEBI:49786"/>
        <label>1</label>
    </ligand>
</feature>
<feature type="binding site" evidence="1">
    <location>
        <position position="138"/>
    </location>
    <ligand>
        <name>Ni(2+)</name>
        <dbReference type="ChEBI" id="CHEBI:49786"/>
        <label>1</label>
    </ligand>
</feature>
<feature type="binding site" description="via carbamate group" evidence="1">
    <location>
        <position position="219"/>
    </location>
    <ligand>
        <name>Ni(2+)</name>
        <dbReference type="ChEBI" id="CHEBI:49786"/>
        <label>1</label>
    </ligand>
</feature>
<feature type="binding site" description="via carbamate group" evidence="1">
    <location>
        <position position="219"/>
    </location>
    <ligand>
        <name>Ni(2+)</name>
        <dbReference type="ChEBI" id="CHEBI:49786"/>
        <label>2</label>
    </ligand>
</feature>
<feature type="binding site" evidence="1">
    <location>
        <position position="221"/>
    </location>
    <ligand>
        <name>substrate</name>
    </ligand>
</feature>
<feature type="binding site" evidence="1">
    <location>
        <position position="248"/>
    </location>
    <ligand>
        <name>Ni(2+)</name>
        <dbReference type="ChEBI" id="CHEBI:49786"/>
        <label>2</label>
    </ligand>
</feature>
<feature type="binding site" evidence="1">
    <location>
        <position position="274"/>
    </location>
    <ligand>
        <name>Ni(2+)</name>
        <dbReference type="ChEBI" id="CHEBI:49786"/>
        <label>2</label>
    </ligand>
</feature>
<feature type="binding site" evidence="1">
    <location>
        <position position="362"/>
    </location>
    <ligand>
        <name>Ni(2+)</name>
        <dbReference type="ChEBI" id="CHEBI:49786"/>
        <label>1</label>
    </ligand>
</feature>
<feature type="modified residue" description="N6-carboxylysine" evidence="1">
    <location>
        <position position="219"/>
    </location>
</feature>
<protein>
    <recommendedName>
        <fullName evidence="1">Urease subunit alpha</fullName>
        <ecNumber evidence="1">3.5.1.5</ecNumber>
    </recommendedName>
    <alternativeName>
        <fullName evidence="1">Urea amidohydrolase subunit alpha</fullName>
    </alternativeName>
</protein>